<dbReference type="EMBL" id="AY178864">
    <property type="protein sequence ID" value="AAP29425.2"/>
    <property type="molecule type" value="Genomic_DNA"/>
</dbReference>
<dbReference type="RefSeq" id="NP_848094.2">
    <property type="nucleotide sequence ID" value="NC_004766.1"/>
</dbReference>
<dbReference type="SMR" id="Q85FI8"/>
<dbReference type="GeneID" id="807395"/>
<dbReference type="GO" id="GO:0009507">
    <property type="term" value="C:chloroplast"/>
    <property type="evidence" value="ECO:0007669"/>
    <property type="project" value="UniProtKB-SubCell"/>
</dbReference>
<dbReference type="GO" id="GO:0005829">
    <property type="term" value="C:cytosol"/>
    <property type="evidence" value="ECO:0007669"/>
    <property type="project" value="TreeGrafter"/>
</dbReference>
<dbReference type="GO" id="GO:0043022">
    <property type="term" value="F:ribosome binding"/>
    <property type="evidence" value="ECO:0007669"/>
    <property type="project" value="UniProtKB-UniRule"/>
</dbReference>
<dbReference type="GO" id="GO:0019843">
    <property type="term" value="F:rRNA binding"/>
    <property type="evidence" value="ECO:0007669"/>
    <property type="project" value="UniProtKB-UniRule"/>
</dbReference>
<dbReference type="GO" id="GO:0003743">
    <property type="term" value="F:translation initiation factor activity"/>
    <property type="evidence" value="ECO:0007669"/>
    <property type="project" value="UniProtKB-UniRule"/>
</dbReference>
<dbReference type="CDD" id="cd04451">
    <property type="entry name" value="S1_IF1"/>
    <property type="match status" value="1"/>
</dbReference>
<dbReference type="FunFam" id="2.40.50.140:FF:000002">
    <property type="entry name" value="Translation initiation factor IF-1"/>
    <property type="match status" value="1"/>
</dbReference>
<dbReference type="Gene3D" id="2.40.50.140">
    <property type="entry name" value="Nucleic acid-binding proteins"/>
    <property type="match status" value="1"/>
</dbReference>
<dbReference type="HAMAP" id="MF_00075">
    <property type="entry name" value="IF_1"/>
    <property type="match status" value="1"/>
</dbReference>
<dbReference type="InterPro" id="IPR012340">
    <property type="entry name" value="NA-bd_OB-fold"/>
</dbReference>
<dbReference type="InterPro" id="IPR006196">
    <property type="entry name" value="RNA-binding_domain_S1_IF1"/>
</dbReference>
<dbReference type="InterPro" id="IPR004368">
    <property type="entry name" value="TIF_IF1"/>
</dbReference>
<dbReference type="NCBIfam" id="TIGR00008">
    <property type="entry name" value="infA"/>
    <property type="match status" value="1"/>
</dbReference>
<dbReference type="PANTHER" id="PTHR33370">
    <property type="entry name" value="TRANSLATION INITIATION FACTOR IF-1, CHLOROPLASTIC"/>
    <property type="match status" value="1"/>
</dbReference>
<dbReference type="PANTHER" id="PTHR33370:SF1">
    <property type="entry name" value="TRANSLATION INITIATION FACTOR IF-1, CHLOROPLASTIC"/>
    <property type="match status" value="1"/>
</dbReference>
<dbReference type="Pfam" id="PF01176">
    <property type="entry name" value="eIF-1a"/>
    <property type="match status" value="1"/>
</dbReference>
<dbReference type="SUPFAM" id="SSF50249">
    <property type="entry name" value="Nucleic acid-binding proteins"/>
    <property type="match status" value="1"/>
</dbReference>
<dbReference type="PROSITE" id="PS50832">
    <property type="entry name" value="S1_IF1_TYPE"/>
    <property type="match status" value="1"/>
</dbReference>
<comment type="function">
    <text evidence="1">One of the essential components for the initiation of protein synthesis. Stabilizes the binding of IF-2 and IF-3 on the 30S subunit to which N-formylmethionyl-tRNA(fMet) subsequently binds. Helps modulate mRNA selection, yielding the 30S pre-initiation complex (PIC). Upon addition of the 50S ribosomal subunit IF-1, IF-2 and IF-3 are released leaving the mature 70S translation initiation complex.</text>
</comment>
<comment type="subunit">
    <text evidence="1">Component of the 30S ribosomal translation pre-initiation complex which assembles on the 30S ribosome in the order IF-2 and IF-3, IF-1 and N-formylmethionyl-tRNA(fMet); mRNA recruitment can occur at any time during PIC assembly.</text>
</comment>
<comment type="subcellular location">
    <subcellularLocation>
        <location evidence="1">Plastid</location>
        <location evidence="1">Chloroplast</location>
    </subcellularLocation>
</comment>
<comment type="RNA editing">
    <location>
        <position position="23" evidence="2"/>
    </location>
    <location>
        <position position="26" evidence="2"/>
    </location>
    <location>
        <position position="55" evidence="2"/>
    </location>
    <text>The nonsense codon at position 23 is modified to a sense codon.</text>
</comment>
<comment type="similarity">
    <text evidence="1">Belongs to the IF-1 family.</text>
</comment>
<protein>
    <recommendedName>
        <fullName evidence="1">Translation initiation factor IF-1, chloroplastic</fullName>
    </recommendedName>
</protein>
<evidence type="ECO:0000255" key="1">
    <source>
        <dbReference type="HAMAP-Rule" id="MF_00075"/>
    </source>
</evidence>
<evidence type="ECO:0000269" key="2">
    <source>
    </source>
</evidence>
<sequence>MKKQNLIDMEGTVTESLPNATFRACLDNGCQVLTHISGRMRRSYIRILPGDRVRVELSPYDLTKGRIIYRLRSRHTNNSQ</sequence>
<accession>Q85FI8</accession>
<geneLocation type="chloroplast"/>
<feature type="chain" id="PRO_0000095915" description="Translation initiation factor IF-1, chloroplastic">
    <location>
        <begin position="1"/>
        <end position="80"/>
    </location>
</feature>
<feature type="domain" description="S1-like" evidence="1">
    <location>
        <begin position="1"/>
        <end position="72"/>
    </location>
</feature>
<gene>
    <name evidence="1" type="primary">infA</name>
</gene>
<reference key="1">
    <citation type="journal article" date="2003" name="DNA Res.">
        <title>Complete nucleotide sequence of the chloroplast genome from a leptosporangiate fern, Adiantum capillus-veneris L.</title>
        <authorList>
            <person name="Wolf P.G."/>
            <person name="Rowe C.A."/>
            <person name="Sinclair R.B."/>
            <person name="Hasebe M."/>
        </authorList>
    </citation>
    <scope>NUCLEOTIDE SEQUENCE [LARGE SCALE GENOMIC DNA]</scope>
</reference>
<reference key="2">
    <citation type="journal article" date="2004" name="Gene">
        <title>High levels of RNA editing in a vascular plant chloroplast genome: analysis of transcripts from the fern Adiantum capillus-veneris.</title>
        <authorList>
            <person name="Wolf P.G."/>
            <person name="Rowe C.A."/>
            <person name="Hasebe M."/>
        </authorList>
    </citation>
    <scope>NUCLEOTIDE SEQUENCE [GENOMIC DNA]</scope>
    <scope>RNA EDITING</scope>
    <source>
        <tissue>Frond</tissue>
    </source>
</reference>
<keyword id="KW-0150">Chloroplast</keyword>
<keyword id="KW-0396">Initiation factor</keyword>
<keyword id="KW-0934">Plastid</keyword>
<keyword id="KW-0648">Protein biosynthesis</keyword>
<keyword id="KW-0691">RNA editing</keyword>
<keyword id="KW-0694">RNA-binding</keyword>
<keyword id="KW-0699">rRNA-binding</keyword>
<organism>
    <name type="scientific">Adiantum capillus-veneris</name>
    <name type="common">Maidenhair fern</name>
    <dbReference type="NCBI Taxonomy" id="13818"/>
    <lineage>
        <taxon>Eukaryota</taxon>
        <taxon>Viridiplantae</taxon>
        <taxon>Streptophyta</taxon>
        <taxon>Embryophyta</taxon>
        <taxon>Tracheophyta</taxon>
        <taxon>Polypodiopsida</taxon>
        <taxon>Polypodiidae</taxon>
        <taxon>Polypodiales</taxon>
        <taxon>Pteridineae</taxon>
        <taxon>Pteridaceae</taxon>
        <taxon>Vittarioideae</taxon>
        <taxon>Adiantum</taxon>
    </lineage>
</organism>
<name>IF1C_ADICA</name>
<proteinExistence type="evidence at transcript level"/>